<accession>Q12026</accession>
<accession>D6VY55</accession>
<evidence type="ECO:0000256" key="1">
    <source>
        <dbReference type="SAM" id="MobiDB-lite"/>
    </source>
</evidence>
<reference key="1">
    <citation type="journal article" date="1997" name="Nature">
        <title>The nucleotide sequence of Saccharomyces cerevisiae chromosome XII.</title>
        <authorList>
            <person name="Johnston M."/>
            <person name="Hillier L.W."/>
            <person name="Riles L."/>
            <person name="Albermann K."/>
            <person name="Andre B."/>
            <person name="Ansorge W."/>
            <person name="Benes V."/>
            <person name="Brueckner M."/>
            <person name="Delius H."/>
            <person name="Dubois E."/>
            <person name="Duesterhoeft A."/>
            <person name="Entian K.-D."/>
            <person name="Floeth M."/>
            <person name="Goffeau A."/>
            <person name="Hebling U."/>
            <person name="Heumann K."/>
            <person name="Heuss-Neitzel D."/>
            <person name="Hilbert H."/>
            <person name="Hilger F."/>
            <person name="Kleine K."/>
            <person name="Koetter P."/>
            <person name="Louis E.J."/>
            <person name="Messenguy F."/>
            <person name="Mewes H.-W."/>
            <person name="Miosga T."/>
            <person name="Moestl D."/>
            <person name="Mueller-Auer S."/>
            <person name="Nentwich U."/>
            <person name="Obermaier B."/>
            <person name="Piravandi E."/>
            <person name="Pohl T.M."/>
            <person name="Portetelle D."/>
            <person name="Purnelle B."/>
            <person name="Rechmann S."/>
            <person name="Rieger M."/>
            <person name="Rinke M."/>
            <person name="Rose M."/>
            <person name="Scharfe M."/>
            <person name="Scherens B."/>
            <person name="Scholler P."/>
            <person name="Schwager C."/>
            <person name="Schwarz S."/>
            <person name="Underwood A.P."/>
            <person name="Urrestarazu L.A."/>
            <person name="Vandenbol M."/>
            <person name="Verhasselt P."/>
            <person name="Vierendeels F."/>
            <person name="Voet M."/>
            <person name="Volckaert G."/>
            <person name="Voss H."/>
            <person name="Wambutt R."/>
            <person name="Wedler E."/>
            <person name="Wedler H."/>
            <person name="Zimmermann F.K."/>
            <person name="Zollner A."/>
            <person name="Hani J."/>
            <person name="Hoheisel J.D."/>
        </authorList>
    </citation>
    <scope>NUCLEOTIDE SEQUENCE [LARGE SCALE GENOMIC DNA]</scope>
    <source>
        <strain>ATCC 204508 / S288c</strain>
    </source>
</reference>
<reference key="2">
    <citation type="journal article" date="2014" name="G3 (Bethesda)">
        <title>The reference genome sequence of Saccharomyces cerevisiae: Then and now.</title>
        <authorList>
            <person name="Engel S.R."/>
            <person name="Dietrich F.S."/>
            <person name="Fisk D.G."/>
            <person name="Binkley G."/>
            <person name="Balakrishnan R."/>
            <person name="Costanzo M.C."/>
            <person name="Dwight S.S."/>
            <person name="Hitz B.C."/>
            <person name="Karra K."/>
            <person name="Nash R.S."/>
            <person name="Weng S."/>
            <person name="Wong E.D."/>
            <person name="Lloyd P."/>
            <person name="Skrzypek M.S."/>
            <person name="Miyasato S.R."/>
            <person name="Simison M."/>
            <person name="Cherry J.M."/>
        </authorList>
    </citation>
    <scope>GENOME REANNOTATION</scope>
    <source>
        <strain>ATCC 204508 / S288c</strain>
    </source>
</reference>
<reference key="3">
    <citation type="journal article" date="2007" name="Genome Res.">
        <title>Approaching a complete repository of sequence-verified protein-encoding clones for Saccharomyces cerevisiae.</title>
        <authorList>
            <person name="Hu Y."/>
            <person name="Rolfs A."/>
            <person name="Bhullar B."/>
            <person name="Murthy T.V.S."/>
            <person name="Zhu C."/>
            <person name="Berger M.F."/>
            <person name="Camargo A.A."/>
            <person name="Kelley F."/>
            <person name="McCarron S."/>
            <person name="Jepson D."/>
            <person name="Richardson A."/>
            <person name="Raphael J."/>
            <person name="Moreira D."/>
            <person name="Taycher E."/>
            <person name="Zuo D."/>
            <person name="Mohr S."/>
            <person name="Kane M.F."/>
            <person name="Williamson J."/>
            <person name="Simpson A.J.G."/>
            <person name="Bulyk M.L."/>
            <person name="Harlow E."/>
            <person name="Marsischky G."/>
            <person name="Kolodner R.D."/>
            <person name="LaBaer J."/>
        </authorList>
    </citation>
    <scope>NUCLEOTIDE SEQUENCE [GENOMIC DNA]</scope>
    <source>
        <strain>ATCC 204508 / S288c</strain>
    </source>
</reference>
<sequence length="108" mass="12693">MDMLHNKCSDAIKSTSNSNLSNEVDKQKLQYDDLGNTGFSELFEMESQDNNDSIEDFLFFNINLTQEVEFENQRQYEHTKKTKKHNPFYVPSEVVREMVKKHALNGRI</sequence>
<feature type="chain" id="PRO_0000247206" description="Putative uncharacterized protein YLR053C">
    <location>
        <begin position="1"/>
        <end position="108"/>
    </location>
</feature>
<feature type="region of interest" description="Disordered" evidence="1">
    <location>
        <begin position="1"/>
        <end position="27"/>
    </location>
</feature>
<feature type="compositionally biased region" description="Basic and acidic residues" evidence="1">
    <location>
        <begin position="1"/>
        <end position="10"/>
    </location>
</feature>
<feature type="compositionally biased region" description="Polar residues" evidence="1">
    <location>
        <begin position="12"/>
        <end position="22"/>
    </location>
</feature>
<proteinExistence type="predicted"/>
<name>YL053_YEAST</name>
<protein>
    <recommendedName>
        <fullName>Putative uncharacterized protein YLR053C</fullName>
    </recommendedName>
</protein>
<keyword id="KW-1185">Reference proteome</keyword>
<dbReference type="EMBL" id="X94607">
    <property type="protein sequence ID" value="CAA64300.1"/>
    <property type="molecule type" value="Genomic_DNA"/>
</dbReference>
<dbReference type="EMBL" id="Z73225">
    <property type="protein sequence ID" value="CAA97583.1"/>
    <property type="molecule type" value="Genomic_DNA"/>
</dbReference>
<dbReference type="EMBL" id="AY692708">
    <property type="protein sequence ID" value="AAT92727.1"/>
    <property type="molecule type" value="Genomic_DNA"/>
</dbReference>
<dbReference type="EMBL" id="BK006945">
    <property type="protein sequence ID" value="DAA09371.1"/>
    <property type="molecule type" value="Genomic_DNA"/>
</dbReference>
<dbReference type="PIR" id="S61627">
    <property type="entry name" value="S61627"/>
</dbReference>
<dbReference type="SMR" id="Q12026"/>
<dbReference type="BioGRID" id="31328">
    <property type="interactions" value="90"/>
</dbReference>
<dbReference type="DIP" id="DIP-2129N"/>
<dbReference type="FunCoup" id="Q12026">
    <property type="interactions" value="3"/>
</dbReference>
<dbReference type="STRING" id="4932.YLR053C"/>
<dbReference type="PaxDb" id="4932-YLR053C"/>
<dbReference type="PeptideAtlas" id="Q12026"/>
<dbReference type="EnsemblFungi" id="YLR053C_mRNA">
    <property type="protein sequence ID" value="YLR053C"/>
    <property type="gene ID" value="YLR053C"/>
</dbReference>
<dbReference type="KEGG" id="sce:YLR053C"/>
<dbReference type="AGR" id="SGD:S000004043"/>
<dbReference type="SGD" id="S000004043">
    <property type="gene designation" value="YLR053C"/>
</dbReference>
<dbReference type="VEuPathDB" id="FungiDB:YLR053C"/>
<dbReference type="HOGENOM" id="CLU_2198486_0_0_1"/>
<dbReference type="InParanoid" id="Q12026"/>
<dbReference type="OMA" id="EVEFENX"/>
<dbReference type="OrthoDB" id="4041911at2759"/>
<dbReference type="BioCyc" id="YEAST:G3O-32209-MONOMER"/>
<dbReference type="BioGRID-ORCS" id="850742">
    <property type="hits" value="1 hit in 10 CRISPR screens"/>
</dbReference>
<dbReference type="PRO" id="PR:Q12026"/>
<dbReference type="Proteomes" id="UP000002311">
    <property type="component" value="Chromosome XII"/>
</dbReference>
<dbReference type="RNAct" id="Q12026">
    <property type="molecule type" value="protein"/>
</dbReference>
<dbReference type="GO" id="GO:0000785">
    <property type="term" value="C:chromatin"/>
    <property type="evidence" value="ECO:0000314"/>
    <property type="project" value="SGD"/>
</dbReference>
<dbReference type="GO" id="GO:1990841">
    <property type="term" value="F:promoter-specific chromatin binding"/>
    <property type="evidence" value="ECO:0000314"/>
    <property type="project" value="SGD"/>
</dbReference>
<dbReference type="GO" id="GO:0044877">
    <property type="term" value="F:protein-containing complex binding"/>
    <property type="evidence" value="ECO:0000314"/>
    <property type="project" value="SGD"/>
</dbReference>
<dbReference type="GO" id="GO:0003713">
    <property type="term" value="F:transcription coactivator activity"/>
    <property type="evidence" value="ECO:0000314"/>
    <property type="project" value="SGD"/>
</dbReference>
<dbReference type="GO" id="GO:0006995">
    <property type="term" value="P:cellular response to nitrogen starvation"/>
    <property type="evidence" value="ECO:0000314"/>
    <property type="project" value="SGD"/>
</dbReference>
<dbReference type="GO" id="GO:0045944">
    <property type="term" value="P:positive regulation of transcription by RNA polymerase II"/>
    <property type="evidence" value="ECO:0000315"/>
    <property type="project" value="SGD"/>
</dbReference>
<gene>
    <name type="ordered locus">YLR053C</name>
    <name type="ORF">L2137</name>
</gene>
<organism>
    <name type="scientific">Saccharomyces cerevisiae (strain ATCC 204508 / S288c)</name>
    <name type="common">Baker's yeast</name>
    <dbReference type="NCBI Taxonomy" id="559292"/>
    <lineage>
        <taxon>Eukaryota</taxon>
        <taxon>Fungi</taxon>
        <taxon>Dikarya</taxon>
        <taxon>Ascomycota</taxon>
        <taxon>Saccharomycotina</taxon>
        <taxon>Saccharomycetes</taxon>
        <taxon>Saccharomycetales</taxon>
        <taxon>Saccharomycetaceae</taxon>
        <taxon>Saccharomyces</taxon>
    </lineage>
</organism>